<protein>
    <recommendedName>
        <fullName evidence="1">7-cyano-7-deazaguanine synthase</fullName>
        <ecNumber evidence="1">6.3.4.20</ecNumber>
    </recommendedName>
    <alternativeName>
        <fullName evidence="1">7-cyano-7-carbaguanine synthase</fullName>
    </alternativeName>
    <alternativeName>
        <fullName evidence="1">PreQ(0) synthase</fullName>
    </alternativeName>
    <alternativeName>
        <fullName evidence="1">Queuosine biosynthesis protein QueC</fullName>
    </alternativeName>
</protein>
<comment type="function">
    <text evidence="1">Catalyzes the ATP-dependent conversion of 7-carboxy-7-deazaguanine (CDG) to 7-cyano-7-deazaguanine (preQ(0)).</text>
</comment>
<comment type="catalytic activity">
    <reaction evidence="1">
        <text>7-carboxy-7-deazaguanine + NH4(+) + ATP = 7-cyano-7-deazaguanine + ADP + phosphate + H2O + H(+)</text>
        <dbReference type="Rhea" id="RHEA:27982"/>
        <dbReference type="ChEBI" id="CHEBI:15377"/>
        <dbReference type="ChEBI" id="CHEBI:15378"/>
        <dbReference type="ChEBI" id="CHEBI:28938"/>
        <dbReference type="ChEBI" id="CHEBI:30616"/>
        <dbReference type="ChEBI" id="CHEBI:43474"/>
        <dbReference type="ChEBI" id="CHEBI:45075"/>
        <dbReference type="ChEBI" id="CHEBI:61036"/>
        <dbReference type="ChEBI" id="CHEBI:456216"/>
        <dbReference type="EC" id="6.3.4.20"/>
    </reaction>
</comment>
<comment type="cofactor">
    <cofactor evidence="1">
        <name>Zn(2+)</name>
        <dbReference type="ChEBI" id="CHEBI:29105"/>
    </cofactor>
    <text evidence="1">Binds 1 zinc ion per subunit.</text>
</comment>
<comment type="pathway">
    <text evidence="1">Purine metabolism; 7-cyano-7-deazaguanine biosynthesis.</text>
</comment>
<comment type="similarity">
    <text evidence="1">Belongs to the QueC family.</text>
</comment>
<dbReference type="EC" id="6.3.4.20" evidence="1"/>
<dbReference type="EMBL" id="CU468135">
    <property type="protein sequence ID" value="CAO97546.1"/>
    <property type="molecule type" value="Genomic_DNA"/>
</dbReference>
<dbReference type="RefSeq" id="WP_012442212.1">
    <property type="nucleotide sequence ID" value="NC_010694.1"/>
</dbReference>
<dbReference type="SMR" id="B2VIU4"/>
<dbReference type="STRING" id="465817.ETA_25000"/>
<dbReference type="KEGG" id="eta:ETA_25000"/>
<dbReference type="eggNOG" id="COG0603">
    <property type="taxonomic scope" value="Bacteria"/>
</dbReference>
<dbReference type="HOGENOM" id="CLU_081854_0_0_6"/>
<dbReference type="OrthoDB" id="9789567at2"/>
<dbReference type="UniPathway" id="UPA00391"/>
<dbReference type="Proteomes" id="UP000001726">
    <property type="component" value="Chromosome"/>
</dbReference>
<dbReference type="GO" id="GO:0005524">
    <property type="term" value="F:ATP binding"/>
    <property type="evidence" value="ECO:0007669"/>
    <property type="project" value="UniProtKB-UniRule"/>
</dbReference>
<dbReference type="GO" id="GO:0016879">
    <property type="term" value="F:ligase activity, forming carbon-nitrogen bonds"/>
    <property type="evidence" value="ECO:0007669"/>
    <property type="project" value="UniProtKB-UniRule"/>
</dbReference>
<dbReference type="GO" id="GO:0008270">
    <property type="term" value="F:zinc ion binding"/>
    <property type="evidence" value="ECO:0007669"/>
    <property type="project" value="UniProtKB-UniRule"/>
</dbReference>
<dbReference type="GO" id="GO:0008616">
    <property type="term" value="P:queuosine biosynthetic process"/>
    <property type="evidence" value="ECO:0007669"/>
    <property type="project" value="UniProtKB-UniRule"/>
</dbReference>
<dbReference type="CDD" id="cd01995">
    <property type="entry name" value="QueC-like"/>
    <property type="match status" value="1"/>
</dbReference>
<dbReference type="FunFam" id="3.40.50.620:FF:000017">
    <property type="entry name" value="7-cyano-7-deazaguanine synthase"/>
    <property type="match status" value="1"/>
</dbReference>
<dbReference type="Gene3D" id="3.40.50.620">
    <property type="entry name" value="HUPs"/>
    <property type="match status" value="1"/>
</dbReference>
<dbReference type="HAMAP" id="MF_01633">
    <property type="entry name" value="QueC"/>
    <property type="match status" value="1"/>
</dbReference>
<dbReference type="InterPro" id="IPR018317">
    <property type="entry name" value="QueC"/>
</dbReference>
<dbReference type="InterPro" id="IPR014729">
    <property type="entry name" value="Rossmann-like_a/b/a_fold"/>
</dbReference>
<dbReference type="NCBIfam" id="TIGR00364">
    <property type="entry name" value="7-cyano-7-deazaguanine synthase QueC"/>
    <property type="match status" value="1"/>
</dbReference>
<dbReference type="NCBIfam" id="NF008317">
    <property type="entry name" value="PRK11106.1"/>
    <property type="match status" value="1"/>
</dbReference>
<dbReference type="PANTHER" id="PTHR42914">
    <property type="entry name" value="7-CYANO-7-DEAZAGUANINE SYNTHASE"/>
    <property type="match status" value="1"/>
</dbReference>
<dbReference type="PANTHER" id="PTHR42914:SF1">
    <property type="entry name" value="7-CYANO-7-DEAZAGUANINE SYNTHASE"/>
    <property type="match status" value="1"/>
</dbReference>
<dbReference type="Pfam" id="PF06508">
    <property type="entry name" value="QueC"/>
    <property type="match status" value="1"/>
</dbReference>
<dbReference type="PIRSF" id="PIRSF006293">
    <property type="entry name" value="ExsB"/>
    <property type="match status" value="1"/>
</dbReference>
<dbReference type="SUPFAM" id="SSF52402">
    <property type="entry name" value="Adenine nucleotide alpha hydrolases-like"/>
    <property type="match status" value="1"/>
</dbReference>
<name>QUEC_ERWT9</name>
<organism>
    <name type="scientific">Erwinia tasmaniensis (strain DSM 17950 / CFBP 7177 / CIP 109463 / NCPPB 4357 / Et1/99)</name>
    <dbReference type="NCBI Taxonomy" id="465817"/>
    <lineage>
        <taxon>Bacteria</taxon>
        <taxon>Pseudomonadati</taxon>
        <taxon>Pseudomonadota</taxon>
        <taxon>Gammaproteobacteria</taxon>
        <taxon>Enterobacterales</taxon>
        <taxon>Erwiniaceae</taxon>
        <taxon>Erwinia</taxon>
    </lineage>
</organism>
<gene>
    <name evidence="1" type="primary">queC</name>
    <name type="ordered locus">ETA_25000</name>
</gene>
<feature type="chain" id="PRO_1000186598" description="7-cyano-7-deazaguanine synthase">
    <location>
        <begin position="1"/>
        <end position="231"/>
    </location>
</feature>
<feature type="binding site" evidence="1">
    <location>
        <begin position="8"/>
        <end position="18"/>
    </location>
    <ligand>
        <name>ATP</name>
        <dbReference type="ChEBI" id="CHEBI:30616"/>
    </ligand>
</feature>
<feature type="binding site" evidence="1">
    <location>
        <position position="188"/>
    </location>
    <ligand>
        <name>Zn(2+)</name>
        <dbReference type="ChEBI" id="CHEBI:29105"/>
    </ligand>
</feature>
<feature type="binding site" evidence="1">
    <location>
        <position position="197"/>
    </location>
    <ligand>
        <name>Zn(2+)</name>
        <dbReference type="ChEBI" id="CHEBI:29105"/>
    </ligand>
</feature>
<feature type="binding site" evidence="1">
    <location>
        <position position="200"/>
    </location>
    <ligand>
        <name>Zn(2+)</name>
        <dbReference type="ChEBI" id="CHEBI:29105"/>
    </ligand>
</feature>
<feature type="binding site" evidence="1">
    <location>
        <position position="203"/>
    </location>
    <ligand>
        <name>Zn(2+)</name>
        <dbReference type="ChEBI" id="CHEBI:29105"/>
    </ligand>
</feature>
<sequence length="231" mass="25603">MKRAVVVFSGGQDSTTCLIQALEQYDEVHCVTFDYGQRHRAEIDVAQQLSASLGVRAHKVLDVTMLNELAASSLTRDNIPVPAYDPSASGLPSTFVPGRNIVFFTFASIYAFQIEAEAIITGACETDFSGYPDCRDEFVKALNRAVNLGMARELRIETPLMWLNKAETWALADYWQQLPLIRHQTLTCYNGIIGDGCGDCAACHLRARGLDQYQQNPTSVMLEMERKTGLA</sequence>
<accession>B2VIU4</accession>
<reference key="1">
    <citation type="journal article" date="2008" name="Environ. Microbiol.">
        <title>The genome of Erwinia tasmaniensis strain Et1/99, a non-pathogenic bacterium in the genus Erwinia.</title>
        <authorList>
            <person name="Kube M."/>
            <person name="Migdoll A.M."/>
            <person name="Mueller I."/>
            <person name="Kuhl H."/>
            <person name="Beck A."/>
            <person name="Reinhardt R."/>
            <person name="Geider K."/>
        </authorList>
    </citation>
    <scope>NUCLEOTIDE SEQUENCE [LARGE SCALE GENOMIC DNA]</scope>
    <source>
        <strain>DSM 17950 / CFBP 7177 / CIP 109463 / NCPPB 4357 / Et1/99</strain>
    </source>
</reference>
<proteinExistence type="inferred from homology"/>
<keyword id="KW-0067">ATP-binding</keyword>
<keyword id="KW-0436">Ligase</keyword>
<keyword id="KW-0479">Metal-binding</keyword>
<keyword id="KW-0547">Nucleotide-binding</keyword>
<keyword id="KW-0671">Queuosine biosynthesis</keyword>
<keyword id="KW-1185">Reference proteome</keyword>
<keyword id="KW-0862">Zinc</keyword>
<evidence type="ECO:0000255" key="1">
    <source>
        <dbReference type="HAMAP-Rule" id="MF_01633"/>
    </source>
</evidence>